<sequence>MGCFGSPTSKQSDVNSEDSKSQKRRSDAISRQLQKDKQLYRATHRLLLLGAGESGKSTIVKQMRILHVDGFSETEKKQKIDDIKKNIRDAILTITGAMSTLNPPVALEKKENEPRVEYIQDYASSPDFNYPPEFYEHTEELWKDKGVLQTYERSNEYQLIDCAKYFLDRVSTIKNPNYTPNEQDILRCRVLTSGIFETRFQVDKVNFHMFDVGGQRDERRKWIQCFNDVTAIIFVTACSSYNMVLREDPTQNRLRESLDLFKSIWNNRWLRTISIILFLNKQDLLAEKIKAGKSKLSEYFSEFNKYQTPSDAIMESNDDPEVIRAKYFIRDEFLRISTASGDGKHYCYPHFTCAVDTENIKRVFNDCRDIIQRMHLRQYELL</sequence>
<proteinExistence type="inferred from homology"/>
<evidence type="ECO:0000250" key="1"/>
<evidence type="ECO:0000250" key="2">
    <source>
        <dbReference type="UniProtKB" id="P04695"/>
    </source>
</evidence>
<evidence type="ECO:0000255" key="3">
    <source>
        <dbReference type="PROSITE-ProRule" id="PRU01230"/>
    </source>
</evidence>
<evidence type="ECO:0000256" key="4">
    <source>
        <dbReference type="SAM" id="MobiDB-lite"/>
    </source>
</evidence>
<evidence type="ECO:0000305" key="5"/>
<evidence type="ECO:0000312" key="6">
    <source>
        <dbReference type="EMBL" id="EAL24812.1"/>
    </source>
</evidence>
<dbReference type="EMBL" id="CM000071">
    <property type="protein sequence ID" value="EAL24812.1"/>
    <property type="status" value="ALT_SEQ"/>
    <property type="molecule type" value="Genomic_DNA"/>
</dbReference>
<dbReference type="RefSeq" id="XP_001360238.1">
    <property type="nucleotide sequence ID" value="XM_001360201.3"/>
</dbReference>
<dbReference type="SMR" id="Q292P9"/>
<dbReference type="FunCoup" id="Q292P9">
    <property type="interactions" value="484"/>
</dbReference>
<dbReference type="STRING" id="46245.Q292P9"/>
<dbReference type="EnsemblMetazoa" id="FBtr0278924">
    <property type="protein sequence ID" value="FBpp0277362"/>
    <property type="gene ID" value="FBgn0075494"/>
</dbReference>
<dbReference type="eggNOG" id="KOG0099">
    <property type="taxonomic scope" value="Eukaryota"/>
</dbReference>
<dbReference type="HOGENOM" id="CLU_014184_3_0_1"/>
<dbReference type="InParanoid" id="Q292P9"/>
<dbReference type="OMA" id="DHVAKCW"/>
<dbReference type="PhylomeDB" id="Q292P9"/>
<dbReference type="ChiTaRS" id="Galphas">
    <property type="organism name" value="fly"/>
</dbReference>
<dbReference type="Proteomes" id="UP000001819">
    <property type="component" value="Unplaced"/>
</dbReference>
<dbReference type="Bgee" id="FBgn0075494">
    <property type="expression patterns" value="Expressed in insect adult head and 2 other cell types or tissues"/>
</dbReference>
<dbReference type="ExpressionAtlas" id="Q292P9">
    <property type="expression patterns" value="baseline"/>
</dbReference>
<dbReference type="GO" id="GO:0005737">
    <property type="term" value="C:cytoplasm"/>
    <property type="evidence" value="ECO:0007669"/>
    <property type="project" value="TreeGrafter"/>
</dbReference>
<dbReference type="GO" id="GO:0005834">
    <property type="term" value="C:heterotrimeric G-protein complex"/>
    <property type="evidence" value="ECO:0007669"/>
    <property type="project" value="TreeGrafter"/>
</dbReference>
<dbReference type="GO" id="GO:0005886">
    <property type="term" value="C:plasma membrane"/>
    <property type="evidence" value="ECO:0000250"/>
    <property type="project" value="UniProtKB"/>
</dbReference>
<dbReference type="GO" id="GO:0045202">
    <property type="term" value="C:synapse"/>
    <property type="evidence" value="ECO:0007669"/>
    <property type="project" value="GOC"/>
</dbReference>
<dbReference type="GO" id="GO:0001664">
    <property type="term" value="F:G protein-coupled receptor binding"/>
    <property type="evidence" value="ECO:0007669"/>
    <property type="project" value="TreeGrafter"/>
</dbReference>
<dbReference type="GO" id="GO:0031683">
    <property type="term" value="F:G-protein beta/gamma-subunit complex binding"/>
    <property type="evidence" value="ECO:0007669"/>
    <property type="project" value="InterPro"/>
</dbReference>
<dbReference type="GO" id="GO:0005525">
    <property type="term" value="F:GTP binding"/>
    <property type="evidence" value="ECO:0007669"/>
    <property type="project" value="UniProtKB-KW"/>
</dbReference>
<dbReference type="GO" id="GO:0003924">
    <property type="term" value="F:GTPase activity"/>
    <property type="evidence" value="ECO:0007669"/>
    <property type="project" value="InterPro"/>
</dbReference>
<dbReference type="GO" id="GO:0046872">
    <property type="term" value="F:metal ion binding"/>
    <property type="evidence" value="ECO:0007669"/>
    <property type="project" value="UniProtKB-KW"/>
</dbReference>
<dbReference type="GO" id="GO:0007191">
    <property type="term" value="P:adenylate cyclase-activating dopamine receptor signaling pathway"/>
    <property type="evidence" value="ECO:0007669"/>
    <property type="project" value="TreeGrafter"/>
</dbReference>
<dbReference type="GO" id="GO:0007268">
    <property type="term" value="P:chemical synaptic transmission"/>
    <property type="evidence" value="ECO:0000250"/>
    <property type="project" value="UniProtKB"/>
</dbReference>
<dbReference type="GO" id="GO:0007476">
    <property type="term" value="P:imaginal disc-derived wing morphogenesis"/>
    <property type="evidence" value="ECO:0000250"/>
    <property type="project" value="UniProtKB"/>
</dbReference>
<dbReference type="GO" id="GO:0007528">
    <property type="term" value="P:neuromuscular junction development"/>
    <property type="evidence" value="ECO:0000250"/>
    <property type="project" value="UniProtKB"/>
</dbReference>
<dbReference type="GO" id="GO:0007606">
    <property type="term" value="P:sensory perception of chemical stimulus"/>
    <property type="evidence" value="ECO:0007669"/>
    <property type="project" value="TreeGrafter"/>
</dbReference>
<dbReference type="CDD" id="cd00066">
    <property type="entry name" value="G-alpha"/>
    <property type="match status" value="1"/>
</dbReference>
<dbReference type="FunFam" id="3.40.50.300:FF:000720">
    <property type="entry name" value="Guanine nucleotide-binding protein G(k) subunit alpha"/>
    <property type="match status" value="1"/>
</dbReference>
<dbReference type="FunFam" id="1.10.400.10:FF:000003">
    <property type="entry name" value="Guanine nucleotide-binding protein G(S) subunit alpha"/>
    <property type="match status" value="1"/>
</dbReference>
<dbReference type="FunFam" id="3.40.50.300:FF:006178">
    <property type="entry name" value="Guanine nucleotide-binding protein G(s) subunit alpha isoforms short"/>
    <property type="match status" value="1"/>
</dbReference>
<dbReference type="Gene3D" id="1.10.400.10">
    <property type="entry name" value="GI Alpha 1, domain 2-like"/>
    <property type="match status" value="1"/>
</dbReference>
<dbReference type="Gene3D" id="3.40.50.300">
    <property type="entry name" value="P-loop containing nucleotide triphosphate hydrolases"/>
    <property type="match status" value="1"/>
</dbReference>
<dbReference type="InterPro" id="IPR000367">
    <property type="entry name" value="Gprotein_alpha_S"/>
</dbReference>
<dbReference type="InterPro" id="IPR001019">
    <property type="entry name" value="Gprotein_alpha_su"/>
</dbReference>
<dbReference type="InterPro" id="IPR011025">
    <property type="entry name" value="GproteinA_insert"/>
</dbReference>
<dbReference type="InterPro" id="IPR027417">
    <property type="entry name" value="P-loop_NTPase"/>
</dbReference>
<dbReference type="PANTHER" id="PTHR10218:SF212">
    <property type="entry name" value="G PROTEIN ALPHA S SUBUNIT"/>
    <property type="match status" value="1"/>
</dbReference>
<dbReference type="PANTHER" id="PTHR10218">
    <property type="entry name" value="GTP-BINDING PROTEIN ALPHA SUBUNIT"/>
    <property type="match status" value="1"/>
</dbReference>
<dbReference type="Pfam" id="PF00503">
    <property type="entry name" value="G-alpha"/>
    <property type="match status" value="1"/>
</dbReference>
<dbReference type="PRINTS" id="PR00318">
    <property type="entry name" value="GPROTEINA"/>
</dbReference>
<dbReference type="PRINTS" id="PR00443">
    <property type="entry name" value="GPROTEINAS"/>
</dbReference>
<dbReference type="SMART" id="SM00275">
    <property type="entry name" value="G_alpha"/>
    <property type="match status" value="1"/>
</dbReference>
<dbReference type="SUPFAM" id="SSF52540">
    <property type="entry name" value="P-loop containing nucleoside triphosphate hydrolases"/>
    <property type="match status" value="1"/>
</dbReference>
<dbReference type="SUPFAM" id="SSF47895">
    <property type="entry name" value="Transducin (alpha subunit), insertion domain"/>
    <property type="match status" value="1"/>
</dbReference>
<dbReference type="PROSITE" id="PS51882">
    <property type="entry name" value="G_ALPHA"/>
    <property type="match status" value="1"/>
</dbReference>
<keyword id="KW-0342">GTP-binding</keyword>
<keyword id="KW-0449">Lipoprotein</keyword>
<keyword id="KW-0460">Magnesium</keyword>
<keyword id="KW-0479">Metal-binding</keyword>
<keyword id="KW-0547">Nucleotide-binding</keyword>
<keyword id="KW-0564">Palmitate</keyword>
<keyword id="KW-1185">Reference proteome</keyword>
<keyword id="KW-0807">Transducer</keyword>
<gene>
    <name type="primary">G-salpha60A</name>
    <name type="ORF">GA15477</name>
</gene>
<comment type="function">
    <text evidence="5">Guanine nucleotide-binding proteins (G proteins) are involved as modulators or transducers in various transmembrane signaling systems. The G(s) protein is involved in hormonal regulation of adenylate cyclase: it activates the cyclase.</text>
</comment>
<comment type="subunit">
    <text evidence="5">G proteins are composed of 3 units; alpha, beta and gamma. The alpha chain contains the guanine nucleotide binding site.</text>
</comment>
<comment type="similarity">
    <text evidence="5">Belongs to the G-alpha family. G(s) subfamily.</text>
</comment>
<comment type="sequence caution" evidence="5">
    <conflict type="erroneous gene model prediction">
        <sequence resource="EMBL-CDS" id="EAL24812"/>
    </conflict>
</comment>
<accession>Q292P9</accession>
<protein>
    <recommendedName>
        <fullName>Guanine nucleotide-binding protein G(s) subunit alpha</fullName>
    </recommendedName>
    <alternativeName>
        <fullName>Adenylate cyclase-stimulating G alpha protein</fullName>
    </alternativeName>
</protein>
<organism>
    <name type="scientific">Drosophila pseudoobscura pseudoobscura</name>
    <name type="common">Fruit fly</name>
    <dbReference type="NCBI Taxonomy" id="46245"/>
    <lineage>
        <taxon>Eukaryota</taxon>
        <taxon>Metazoa</taxon>
        <taxon>Ecdysozoa</taxon>
        <taxon>Arthropoda</taxon>
        <taxon>Hexapoda</taxon>
        <taxon>Insecta</taxon>
        <taxon>Pterygota</taxon>
        <taxon>Neoptera</taxon>
        <taxon>Endopterygota</taxon>
        <taxon>Diptera</taxon>
        <taxon>Brachycera</taxon>
        <taxon>Muscomorpha</taxon>
        <taxon>Ephydroidea</taxon>
        <taxon>Drosophilidae</taxon>
        <taxon>Drosophila</taxon>
        <taxon>Sophophora</taxon>
    </lineage>
</organism>
<feature type="initiator methionine" description="Removed" evidence="1">
    <location>
        <position position="1"/>
    </location>
</feature>
<feature type="chain" id="PRO_0000233313" description="Guanine nucleotide-binding protein G(s) subunit alpha">
    <location>
        <begin position="2"/>
        <end position="382"/>
    </location>
</feature>
<feature type="domain" description="G-alpha" evidence="3">
    <location>
        <begin position="42"/>
        <end position="382"/>
    </location>
</feature>
<feature type="region of interest" description="Disordered" evidence="4">
    <location>
        <begin position="1"/>
        <end position="31"/>
    </location>
</feature>
<feature type="region of interest" description="G1 motif" evidence="3">
    <location>
        <begin position="45"/>
        <end position="58"/>
    </location>
</feature>
<feature type="region of interest" description="G2 motif" evidence="3">
    <location>
        <begin position="184"/>
        <end position="192"/>
    </location>
</feature>
<feature type="region of interest" description="G3 motif" evidence="3">
    <location>
        <begin position="207"/>
        <end position="216"/>
    </location>
</feature>
<feature type="region of interest" description="G4 motif" evidence="3">
    <location>
        <begin position="276"/>
        <end position="283"/>
    </location>
</feature>
<feature type="region of interest" description="G5 motif" evidence="3">
    <location>
        <begin position="352"/>
        <end position="357"/>
    </location>
</feature>
<feature type="compositionally biased region" description="Polar residues" evidence="4">
    <location>
        <begin position="1"/>
        <end position="14"/>
    </location>
</feature>
<feature type="compositionally biased region" description="Basic and acidic residues" evidence="4">
    <location>
        <begin position="17"/>
        <end position="31"/>
    </location>
</feature>
<feature type="binding site" evidence="1">
    <location>
        <begin position="50"/>
        <end position="57"/>
    </location>
    <ligand>
        <name>GTP</name>
        <dbReference type="ChEBI" id="CHEBI:37565"/>
    </ligand>
</feature>
<feature type="binding site" evidence="2">
    <location>
        <begin position="51"/>
        <end position="58"/>
    </location>
    <ligand>
        <name>GTP</name>
        <dbReference type="ChEBI" id="CHEBI:37565"/>
    </ligand>
</feature>
<feature type="binding site" evidence="1">
    <location>
        <position position="57"/>
    </location>
    <ligand>
        <name>Mg(2+)</name>
        <dbReference type="ChEBI" id="CHEBI:18420"/>
    </ligand>
</feature>
<feature type="binding site" evidence="1">
    <location>
        <begin position="186"/>
        <end position="192"/>
    </location>
    <ligand>
        <name>GTP</name>
        <dbReference type="ChEBI" id="CHEBI:37565"/>
    </ligand>
</feature>
<feature type="binding site" evidence="1">
    <location>
        <position position="192"/>
    </location>
    <ligand>
        <name>Mg(2+)</name>
        <dbReference type="ChEBI" id="CHEBI:18420"/>
    </ligand>
</feature>
<feature type="binding site" evidence="1">
    <location>
        <begin position="211"/>
        <end position="215"/>
    </location>
    <ligand>
        <name>GTP</name>
        <dbReference type="ChEBI" id="CHEBI:37565"/>
    </ligand>
</feature>
<feature type="binding site" evidence="2">
    <location>
        <begin position="212"/>
        <end position="216"/>
    </location>
    <ligand>
        <name>GTP</name>
        <dbReference type="ChEBI" id="CHEBI:37565"/>
    </ligand>
</feature>
<feature type="binding site" evidence="1">
    <location>
        <begin position="280"/>
        <end position="283"/>
    </location>
    <ligand>
        <name>GTP</name>
        <dbReference type="ChEBI" id="CHEBI:37565"/>
    </ligand>
</feature>
<feature type="binding site" evidence="2">
    <location>
        <begin position="281"/>
        <end position="284"/>
    </location>
    <ligand>
        <name>GTP</name>
        <dbReference type="ChEBI" id="CHEBI:37565"/>
    </ligand>
</feature>
<feature type="binding site" evidence="1">
    <location>
        <position position="354"/>
    </location>
    <ligand>
        <name>GTP</name>
        <dbReference type="ChEBI" id="CHEBI:37565"/>
    </ligand>
</feature>
<feature type="lipid moiety-binding region" description="N-palmitoyl glycine" evidence="1">
    <location>
        <position position="2"/>
    </location>
</feature>
<feature type="lipid moiety-binding region" description="S-palmitoyl cysteine" evidence="2">
    <location>
        <position position="3"/>
    </location>
</feature>
<name>GNAS_DROPS</name>
<reference evidence="6" key="1">
    <citation type="journal article" date="2005" name="Genome Res.">
        <title>Comparative genome sequencing of Drosophila pseudoobscura: chromosomal, gene, and cis-element evolution.</title>
        <authorList>
            <person name="Richards S."/>
            <person name="Liu Y."/>
            <person name="Bettencourt B.R."/>
            <person name="Hradecky P."/>
            <person name="Letovsky S."/>
            <person name="Nielsen R."/>
            <person name="Thornton K."/>
            <person name="Hubisz M.J."/>
            <person name="Chen R."/>
            <person name="Meisel R.P."/>
            <person name="Couronne O."/>
            <person name="Hua S."/>
            <person name="Smith M.A."/>
            <person name="Zhang P."/>
            <person name="Liu J."/>
            <person name="Bussemaker H.J."/>
            <person name="van Batenburg M.F."/>
            <person name="Howells S.L."/>
            <person name="Scherer S.E."/>
            <person name="Sodergren E."/>
            <person name="Matthews B.B."/>
            <person name="Crosby M.A."/>
            <person name="Schroeder A.J."/>
            <person name="Ortiz-Barrientos D."/>
            <person name="Rives C.M."/>
            <person name="Metzker M.L."/>
            <person name="Muzny D.M."/>
            <person name="Scott G."/>
            <person name="Steffen D."/>
            <person name="Wheeler D.A."/>
            <person name="Worley K.C."/>
            <person name="Havlak P."/>
            <person name="Durbin K.J."/>
            <person name="Egan A."/>
            <person name="Gill R."/>
            <person name="Hume J."/>
            <person name="Morgan M.B."/>
            <person name="Miner G."/>
            <person name="Hamilton C."/>
            <person name="Huang Y."/>
            <person name="Waldron L."/>
            <person name="Verduzco D."/>
            <person name="Clerc-Blankenburg K.P."/>
            <person name="Dubchak I."/>
            <person name="Noor M.A.F."/>
            <person name="Anderson W."/>
            <person name="White K.P."/>
            <person name="Clark A.G."/>
            <person name="Schaeffer S.W."/>
            <person name="Gelbart W.M."/>
            <person name="Weinstock G.M."/>
            <person name="Gibbs R.A."/>
        </authorList>
    </citation>
    <scope>NUCLEOTIDE SEQUENCE [LARGE SCALE GENOMIC DNA]</scope>
    <source>
        <strain>MV2-25 / Tucson 14011-0121.94</strain>
    </source>
</reference>